<keyword id="KW-0134">Cell wall</keyword>
<keyword id="KW-0903">Direct protein sequencing</keyword>
<keyword id="KW-0325">Glycoprotein</keyword>
<keyword id="KW-0677">Repeat</keyword>
<keyword id="KW-0701">S-layer</keyword>
<keyword id="KW-0964">Secreted</keyword>
<keyword id="KW-0732">Signal</keyword>
<reference key="1">
    <citation type="journal article" date="1989" name="J. Bacteriol.">
        <title>S-layer protein gene of Acetogenium kivui: cloning and expression in Escherichia coli and determination of the nucleotide sequence.</title>
        <authorList>
            <person name="Peters J."/>
            <person name="Peters M."/>
            <person name="Lottspeich F."/>
            <person name="Baumeister W."/>
        </authorList>
    </citation>
    <scope>NUCLEOTIDE SEQUENCE [GENOMIC DNA]</scope>
    <scope>PARTIAL PROTEIN SEQUENCE</scope>
    <source>
        <strain>ATCC 33488 / DSM 2030 / LKT-1</strain>
    </source>
</reference>
<reference key="2">
    <citation type="journal article" date="1992" name="Biol. Chem. Hoppe-Seyler">
        <title>Evidence for tyrosine-linked glycosaminoglycan in a bacterial surface protein.</title>
        <authorList>
            <person name="Peters J."/>
            <person name="Rudolf S."/>
            <person name="Oschkinat H."/>
            <person name="Mengele R."/>
            <person name="Sumper M."/>
            <person name="Kellermann J."/>
            <person name="Lottspeich F."/>
            <person name="Baumeister W."/>
        </authorList>
    </citation>
    <scope>PARTIAL PROTEIN SEQUENCE</scope>
    <scope>GLYCOSYLATION AT TYR-297; TYR-516; TYR-520 AND TYR-632</scope>
    <source>
        <strain>ATCC 33488 / DSM 2030 / LKT-1</strain>
    </source>
</reference>
<reference key="3">
    <citation type="journal article" date="1994" name="J. Bacteriol.">
        <title>Domain structure of the Acetogenium kivui surface layer revealed by electron crystallography and sequence analysis.</title>
        <authorList>
            <person name="Lupas A."/>
            <person name="Engelhardt H."/>
            <person name="Peters J."/>
            <person name="Santarius U."/>
            <person name="Volker S."/>
            <person name="Baumeister W."/>
        </authorList>
    </citation>
    <scope>DOMAINS</scope>
</reference>
<comment type="function">
    <text>The S-layer is a paracrystalline mono-layered assembly of proteins which coat the surface of bacteria.</text>
</comment>
<comment type="subcellular location">
    <subcellularLocation>
        <location>Secreted</location>
        <location>Cell wall</location>
        <location>S-layer</location>
    </subcellularLocation>
    <text>This bacterium is covered by a S-layer with hexagonal symmetry.</text>
</comment>
<comment type="PTM">
    <text evidence="2">Glycosylated; contains 8% carbohydrates, which correspond to about 40 to 50 sugar molecules per monomer. O-linked glycans consist of Glc, GalNAc and GlcNAc.</text>
</comment>
<name>SLAP_THEKI</name>
<organism>
    <name type="scientific">Thermoanaerobacter kivui</name>
    <name type="common">Acetogenium kivui</name>
    <dbReference type="NCBI Taxonomy" id="2325"/>
    <lineage>
        <taxon>Bacteria</taxon>
        <taxon>Bacillati</taxon>
        <taxon>Bacillota</taxon>
        <taxon>Clostridia</taxon>
        <taxon>Thermoanaerobacterales</taxon>
        <taxon>Thermoanaerobacteraceae</taxon>
        <taxon>Thermoanaerobacter</taxon>
    </lineage>
</organism>
<sequence>MKNLKKLIAVVSTFALVFSAMAVGFAATTPFTDVKDDAPYASAVARLYALNITNGVGDPKFGVDQPVTRAQMITFVNRMLGYEDLAEMAKSEKSAFKDVPQNHWAVGQINLAYKLGLAQGVGNGKFDPNSELRYAQALAFVLRALGFKDLDWPYGYLAKAQDLGLVHGLNLAYNGVIKRGDLALILDRALEVPMVKYVDGKEVLGEPLISKVATKAEYTVIATNAQDRSVEEGKVAVLDKDGKLTTINAGLVDFSEYLGKKVIVYSERFGDPVYVAEGDNDVVSFTEGQDSVGTTVYKNDDNKTAIKVDDNAYVLYNGYLTKVSKVTVKEGAEVTIINNNYLIVNGSYDNSTIVYNDVQSGDKYLNRDSNYELKGTVTVTGAVSKVTDIKANDYIYYGKQYDVNGNVVGTVIYVVRNQVTGTVTEKSVSGSTYKASIDNVSYTVADNNVWNQLEPGKKVTVILNKDNVIVGISSTTTTTAVNYAIFKEKSDPFTAWFAKVKLILPDAAEKVFDAVYSDVYDKVNLAEGTIVTYTVDANGKLNDIQRANDQPFSSASYKADAKVLTEGSTTYYITDNTVLLNNTSDGYKALKLTDLKDATNLNVKIVADNYNVAKVVVFNNASFVSTTTSTVYAYVTGTADVYVNGSTFTRLTVLENGQTKTYDANAQLATNYTHKAVVLTLTNAKIANIALPTVASGVKLTNIDQANLRITDTTNKGYLLDPNFIVVDTNGNLKGLSDITKDTGVNLYTNDVGKVFVIEIVQ</sequence>
<protein>
    <recommendedName>
        <fullName>Cell surface protein</fullName>
    </recommendedName>
    <alternativeName>
        <fullName>S-layer protein</fullName>
    </alternativeName>
</protein>
<proteinExistence type="evidence at protein level"/>
<dbReference type="EMBL" id="M31069">
    <property type="protein sequence ID" value="AAA21930.1"/>
    <property type="molecule type" value="Genomic_DNA"/>
</dbReference>
<dbReference type="PIR" id="A34355">
    <property type="entry name" value="A34355"/>
</dbReference>
<dbReference type="SMR" id="P22258"/>
<dbReference type="STRING" id="2325.TKV_c23170"/>
<dbReference type="eggNOG" id="COG2373">
    <property type="taxonomic scope" value="Bacteria"/>
</dbReference>
<dbReference type="GO" id="GO:0005576">
    <property type="term" value="C:extracellular region"/>
    <property type="evidence" value="ECO:0007669"/>
    <property type="project" value="UniProtKB-KW"/>
</dbReference>
<dbReference type="GO" id="GO:0030115">
    <property type="term" value="C:S-layer"/>
    <property type="evidence" value="ECO:0007669"/>
    <property type="project" value="UniProtKB-SubCell"/>
</dbReference>
<dbReference type="InterPro" id="IPR001119">
    <property type="entry name" value="SLH_dom"/>
</dbReference>
<dbReference type="Pfam" id="PF00395">
    <property type="entry name" value="SLH"/>
    <property type="match status" value="2"/>
</dbReference>
<dbReference type="PROSITE" id="PS51272">
    <property type="entry name" value="SLH"/>
    <property type="match status" value="2"/>
</dbReference>
<accession>P22258</accession>
<feature type="signal peptide">
    <location>
        <begin position="1"/>
        <end position="26"/>
    </location>
</feature>
<feature type="chain" id="PRO_0000032625" description="Cell surface protein">
    <location>
        <begin position="27"/>
        <end position="762"/>
    </location>
</feature>
<feature type="domain" description="SLH 1" evidence="1">
    <location>
        <begin position="27"/>
        <end position="90"/>
    </location>
</feature>
<feature type="domain" description="SLH 2" evidence="1">
    <location>
        <begin position="92"/>
        <end position="155"/>
    </location>
</feature>
<feature type="domain" description="SLH 3" evidence="1">
    <location>
        <begin position="156"/>
        <end position="204"/>
    </location>
</feature>
<feature type="glycosylation site" description="O-linked (Glc...) tyrosine" evidence="2">
    <location>
        <position position="297"/>
    </location>
</feature>
<feature type="glycosylation site" description="O-linked (Glc...) tyrosine" evidence="2">
    <location>
        <position position="516"/>
    </location>
</feature>
<feature type="glycosylation site" description="O-linked (Glc...) tyrosine" evidence="2">
    <location>
        <position position="520"/>
    </location>
</feature>
<feature type="glycosylation site" description="O-linked (Glc...) tyrosine" evidence="2">
    <location>
        <position position="632"/>
    </location>
</feature>
<evidence type="ECO:0000255" key="1">
    <source>
        <dbReference type="PROSITE-ProRule" id="PRU00777"/>
    </source>
</evidence>
<evidence type="ECO:0000269" key="2">
    <source>
    </source>
</evidence>